<feature type="chain" id="PRO_1000118844" description="4-hydroxy-tetrahydrodipicolinate reductase">
    <location>
        <begin position="1"/>
        <end position="251"/>
    </location>
</feature>
<feature type="active site" description="Proton donor/acceptor" evidence="1">
    <location>
        <position position="136"/>
    </location>
</feature>
<feature type="active site" description="Proton donor" evidence="1">
    <location>
        <position position="140"/>
    </location>
</feature>
<feature type="binding site" evidence="1">
    <location>
        <begin position="8"/>
        <end position="13"/>
    </location>
    <ligand>
        <name>NAD(+)</name>
        <dbReference type="ChEBI" id="CHEBI:57540"/>
    </ligand>
</feature>
<feature type="binding site" evidence="1">
    <location>
        <begin position="76"/>
        <end position="78"/>
    </location>
    <ligand>
        <name>NAD(+)</name>
        <dbReference type="ChEBI" id="CHEBI:57540"/>
    </ligand>
</feature>
<feature type="binding site" evidence="1">
    <location>
        <begin position="106"/>
        <end position="109"/>
    </location>
    <ligand>
        <name>NAD(+)</name>
        <dbReference type="ChEBI" id="CHEBI:57540"/>
    </ligand>
</feature>
<feature type="binding site" evidence="1">
    <location>
        <position position="137"/>
    </location>
    <ligand>
        <name>(S)-2,3,4,5-tetrahydrodipicolinate</name>
        <dbReference type="ChEBI" id="CHEBI:16845"/>
    </ligand>
</feature>
<feature type="binding site" evidence="1">
    <location>
        <begin position="146"/>
        <end position="147"/>
    </location>
    <ligand>
        <name>(S)-2,3,4,5-tetrahydrodipicolinate</name>
        <dbReference type="ChEBI" id="CHEBI:16845"/>
    </ligand>
</feature>
<sequence length="251" mass="26335">MIKVSVVGAKGRMGSHVVEAVNKAEDTQLALALDADDDLTQVTTDNTDVVVEFTVPSVSLNNVLTLIGQGVDVVVGTTGWTDEKLTQVKSAIANGPKPETQKVFIAPNFAISAVLADYFATKAARYFESAEVIELHHPTKVDAPSGTAIHTAHGIAEARKAAGLAPVPDATETDGGSRGQVVDGIHVHAVRLRGLNAHEEVLFGNAGEQLTIRADSFDRTSFMPGVLLAVRKLAGDAPAGLTIGLDHFLDL</sequence>
<reference key="1">
    <citation type="journal article" date="2008" name="Proc. Natl. Acad. Sci. U.S.A.">
        <title>The genome sequence of Bifidobacterium longum subsp. infantis reveals adaptations for milk utilization within the infant microbiome.</title>
        <authorList>
            <person name="Sela D.A."/>
            <person name="Chapman J."/>
            <person name="Adeuya A."/>
            <person name="Kim J.H."/>
            <person name="Chen F."/>
            <person name="Whitehead T.R."/>
            <person name="Lapidus A."/>
            <person name="Rokhsar D.S."/>
            <person name="Lebrilla C.B."/>
            <person name="German J.B."/>
            <person name="Price N.P."/>
            <person name="Richardson P.M."/>
            <person name="Mills D.A."/>
        </authorList>
    </citation>
    <scope>NUCLEOTIDE SEQUENCE [LARGE SCALE GENOMIC DNA]</scope>
    <source>
        <strain>ATCC 15697 / DSM 20088 / JCM 1222 / NCTC 11817 / S12</strain>
    </source>
</reference>
<reference key="2">
    <citation type="journal article" date="2011" name="Nature">
        <title>Bifidobacteria can protect from enteropathogenic infection through production of acetate.</title>
        <authorList>
            <person name="Fukuda S."/>
            <person name="Toh H."/>
            <person name="Hase K."/>
            <person name="Oshima K."/>
            <person name="Nakanishi Y."/>
            <person name="Yoshimura K."/>
            <person name="Tobe T."/>
            <person name="Clarke J.M."/>
            <person name="Topping D.L."/>
            <person name="Suzuki T."/>
            <person name="Taylor T.D."/>
            <person name="Itoh K."/>
            <person name="Kikuchi J."/>
            <person name="Morita H."/>
            <person name="Hattori M."/>
            <person name="Ohno H."/>
        </authorList>
    </citation>
    <scope>NUCLEOTIDE SEQUENCE [LARGE SCALE GENOMIC DNA]</scope>
    <source>
        <strain>ATCC 15697 / DSM 20088 / JCM 1222 / NCTC 11817 / S12</strain>
    </source>
</reference>
<organism>
    <name type="scientific">Bifidobacterium longum subsp. infantis (strain ATCC 15697 / DSM 20088 / JCM 1222 / NCTC 11817 / S12)</name>
    <dbReference type="NCBI Taxonomy" id="391904"/>
    <lineage>
        <taxon>Bacteria</taxon>
        <taxon>Bacillati</taxon>
        <taxon>Actinomycetota</taxon>
        <taxon>Actinomycetes</taxon>
        <taxon>Bifidobacteriales</taxon>
        <taxon>Bifidobacteriaceae</taxon>
        <taxon>Bifidobacterium</taxon>
    </lineage>
</organism>
<accession>B7GUF6</accession>
<accession>E8MMB3</accession>
<protein>
    <recommendedName>
        <fullName evidence="1">4-hydroxy-tetrahydrodipicolinate reductase</fullName>
        <shortName evidence="1">HTPA reductase</shortName>
        <ecNumber evidence="1">1.17.1.8</ecNumber>
    </recommendedName>
</protein>
<gene>
    <name evidence="1" type="primary">dapB</name>
    <name type="ordered locus">Blon_2035</name>
    <name type="ordered locus">BLIJ_2113</name>
</gene>
<comment type="function">
    <text evidence="1">Catalyzes the conversion of 4-hydroxy-tetrahydrodipicolinate (HTPA) to tetrahydrodipicolinate.</text>
</comment>
<comment type="catalytic activity">
    <reaction evidence="1">
        <text>(S)-2,3,4,5-tetrahydrodipicolinate + NAD(+) + H2O = (2S,4S)-4-hydroxy-2,3,4,5-tetrahydrodipicolinate + NADH + H(+)</text>
        <dbReference type="Rhea" id="RHEA:35323"/>
        <dbReference type="ChEBI" id="CHEBI:15377"/>
        <dbReference type="ChEBI" id="CHEBI:15378"/>
        <dbReference type="ChEBI" id="CHEBI:16845"/>
        <dbReference type="ChEBI" id="CHEBI:57540"/>
        <dbReference type="ChEBI" id="CHEBI:57945"/>
        <dbReference type="ChEBI" id="CHEBI:67139"/>
        <dbReference type="EC" id="1.17.1.8"/>
    </reaction>
</comment>
<comment type="catalytic activity">
    <reaction evidence="1">
        <text>(S)-2,3,4,5-tetrahydrodipicolinate + NADP(+) + H2O = (2S,4S)-4-hydroxy-2,3,4,5-tetrahydrodipicolinate + NADPH + H(+)</text>
        <dbReference type="Rhea" id="RHEA:35331"/>
        <dbReference type="ChEBI" id="CHEBI:15377"/>
        <dbReference type="ChEBI" id="CHEBI:15378"/>
        <dbReference type="ChEBI" id="CHEBI:16845"/>
        <dbReference type="ChEBI" id="CHEBI:57783"/>
        <dbReference type="ChEBI" id="CHEBI:58349"/>
        <dbReference type="ChEBI" id="CHEBI:67139"/>
        <dbReference type="EC" id="1.17.1.8"/>
    </reaction>
</comment>
<comment type="pathway">
    <text evidence="1">Amino-acid biosynthesis; L-lysine biosynthesis via DAP pathway; (S)-tetrahydrodipicolinate from L-aspartate: step 4/4.</text>
</comment>
<comment type="subcellular location">
    <subcellularLocation>
        <location evidence="1">Cytoplasm</location>
    </subcellularLocation>
</comment>
<comment type="similarity">
    <text evidence="1">Belongs to the DapB family.</text>
</comment>
<comment type="caution">
    <text evidence="2">Was originally thought to be a dihydrodipicolinate reductase (DHDPR), catalyzing the conversion of dihydrodipicolinate to tetrahydrodipicolinate. However, it was shown in E.coli that the substrate of the enzymatic reaction is not dihydrodipicolinate (DHDP) but in fact (2S,4S)-4-hydroxy-2,3,4,5-tetrahydrodipicolinic acid (HTPA), the product released by the DapA-catalyzed reaction.</text>
</comment>
<keyword id="KW-0028">Amino-acid biosynthesis</keyword>
<keyword id="KW-0963">Cytoplasm</keyword>
<keyword id="KW-0220">Diaminopimelate biosynthesis</keyword>
<keyword id="KW-0457">Lysine biosynthesis</keyword>
<keyword id="KW-0520">NAD</keyword>
<keyword id="KW-0521">NADP</keyword>
<keyword id="KW-0560">Oxidoreductase</keyword>
<dbReference type="EC" id="1.17.1.8" evidence="1"/>
<dbReference type="EMBL" id="CP001095">
    <property type="protein sequence ID" value="ACJ53102.1"/>
    <property type="molecule type" value="Genomic_DNA"/>
</dbReference>
<dbReference type="EMBL" id="AP010889">
    <property type="protein sequence ID" value="BAJ69690.1"/>
    <property type="molecule type" value="Genomic_DNA"/>
</dbReference>
<dbReference type="RefSeq" id="WP_012578307.1">
    <property type="nucleotide sequence ID" value="NC_011593.1"/>
</dbReference>
<dbReference type="SMR" id="B7GUF6"/>
<dbReference type="KEGG" id="bln:Blon_2035"/>
<dbReference type="KEGG" id="blon:BLIJ_2113"/>
<dbReference type="PATRIC" id="fig|391904.8.peg.2120"/>
<dbReference type="HOGENOM" id="CLU_047479_0_1_11"/>
<dbReference type="UniPathway" id="UPA00034">
    <property type="reaction ID" value="UER00018"/>
</dbReference>
<dbReference type="Proteomes" id="UP000001360">
    <property type="component" value="Chromosome"/>
</dbReference>
<dbReference type="GO" id="GO:0005737">
    <property type="term" value="C:cytoplasm"/>
    <property type="evidence" value="ECO:0007669"/>
    <property type="project" value="UniProtKB-SubCell"/>
</dbReference>
<dbReference type="GO" id="GO:0008839">
    <property type="term" value="F:4-hydroxy-tetrahydrodipicolinate reductase"/>
    <property type="evidence" value="ECO:0007669"/>
    <property type="project" value="UniProtKB-EC"/>
</dbReference>
<dbReference type="GO" id="GO:0051287">
    <property type="term" value="F:NAD binding"/>
    <property type="evidence" value="ECO:0007669"/>
    <property type="project" value="UniProtKB-UniRule"/>
</dbReference>
<dbReference type="GO" id="GO:0050661">
    <property type="term" value="F:NADP binding"/>
    <property type="evidence" value="ECO:0007669"/>
    <property type="project" value="UniProtKB-UniRule"/>
</dbReference>
<dbReference type="GO" id="GO:0016726">
    <property type="term" value="F:oxidoreductase activity, acting on CH or CH2 groups, NAD or NADP as acceptor"/>
    <property type="evidence" value="ECO:0007669"/>
    <property type="project" value="UniProtKB-UniRule"/>
</dbReference>
<dbReference type="GO" id="GO:0019877">
    <property type="term" value="P:diaminopimelate biosynthetic process"/>
    <property type="evidence" value="ECO:0007669"/>
    <property type="project" value="UniProtKB-UniRule"/>
</dbReference>
<dbReference type="GO" id="GO:0009089">
    <property type="term" value="P:lysine biosynthetic process via diaminopimelate"/>
    <property type="evidence" value="ECO:0007669"/>
    <property type="project" value="UniProtKB-UniRule"/>
</dbReference>
<dbReference type="CDD" id="cd02274">
    <property type="entry name" value="DHDPR_N"/>
    <property type="match status" value="1"/>
</dbReference>
<dbReference type="FunFam" id="3.30.360.10:FF:000009">
    <property type="entry name" value="4-hydroxy-tetrahydrodipicolinate reductase"/>
    <property type="match status" value="1"/>
</dbReference>
<dbReference type="Gene3D" id="3.30.360.10">
    <property type="entry name" value="Dihydrodipicolinate Reductase, domain 2"/>
    <property type="match status" value="1"/>
</dbReference>
<dbReference type="Gene3D" id="3.40.50.720">
    <property type="entry name" value="NAD(P)-binding Rossmann-like Domain"/>
    <property type="match status" value="1"/>
</dbReference>
<dbReference type="HAMAP" id="MF_00102">
    <property type="entry name" value="DapB"/>
    <property type="match status" value="1"/>
</dbReference>
<dbReference type="InterPro" id="IPR022663">
    <property type="entry name" value="DapB_C"/>
</dbReference>
<dbReference type="InterPro" id="IPR000846">
    <property type="entry name" value="DapB_N"/>
</dbReference>
<dbReference type="InterPro" id="IPR022664">
    <property type="entry name" value="DapB_N_CS"/>
</dbReference>
<dbReference type="InterPro" id="IPR023940">
    <property type="entry name" value="DHDPR_bac"/>
</dbReference>
<dbReference type="InterPro" id="IPR036291">
    <property type="entry name" value="NAD(P)-bd_dom_sf"/>
</dbReference>
<dbReference type="NCBIfam" id="TIGR00036">
    <property type="entry name" value="dapB"/>
    <property type="match status" value="1"/>
</dbReference>
<dbReference type="PANTHER" id="PTHR20836:SF0">
    <property type="entry name" value="4-HYDROXY-TETRAHYDRODIPICOLINATE REDUCTASE 1, CHLOROPLASTIC-RELATED"/>
    <property type="match status" value="1"/>
</dbReference>
<dbReference type="PANTHER" id="PTHR20836">
    <property type="entry name" value="DIHYDRODIPICOLINATE REDUCTASE"/>
    <property type="match status" value="1"/>
</dbReference>
<dbReference type="Pfam" id="PF05173">
    <property type="entry name" value="DapB_C"/>
    <property type="match status" value="1"/>
</dbReference>
<dbReference type="Pfam" id="PF01113">
    <property type="entry name" value="DapB_N"/>
    <property type="match status" value="1"/>
</dbReference>
<dbReference type="PIRSF" id="PIRSF000161">
    <property type="entry name" value="DHPR"/>
    <property type="match status" value="1"/>
</dbReference>
<dbReference type="SUPFAM" id="SSF55347">
    <property type="entry name" value="Glyceraldehyde-3-phosphate dehydrogenase-like, C-terminal domain"/>
    <property type="match status" value="1"/>
</dbReference>
<dbReference type="SUPFAM" id="SSF51735">
    <property type="entry name" value="NAD(P)-binding Rossmann-fold domains"/>
    <property type="match status" value="1"/>
</dbReference>
<dbReference type="PROSITE" id="PS01298">
    <property type="entry name" value="DAPB"/>
    <property type="match status" value="1"/>
</dbReference>
<evidence type="ECO:0000255" key="1">
    <source>
        <dbReference type="HAMAP-Rule" id="MF_00102"/>
    </source>
</evidence>
<evidence type="ECO:0000305" key="2"/>
<name>DAPB_BIFLS</name>
<proteinExistence type="inferred from homology"/>